<dbReference type="EMBL" id="CP001074">
    <property type="protein sequence ID" value="ACE90718.1"/>
    <property type="molecule type" value="Genomic_DNA"/>
</dbReference>
<dbReference type="SMR" id="B3PWS0"/>
<dbReference type="KEGG" id="rec:RHECIAT_CH0001748"/>
<dbReference type="eggNOG" id="COG0051">
    <property type="taxonomic scope" value="Bacteria"/>
</dbReference>
<dbReference type="HOGENOM" id="CLU_122625_1_3_5"/>
<dbReference type="Proteomes" id="UP000008817">
    <property type="component" value="Chromosome"/>
</dbReference>
<dbReference type="GO" id="GO:1990904">
    <property type="term" value="C:ribonucleoprotein complex"/>
    <property type="evidence" value="ECO:0007669"/>
    <property type="project" value="UniProtKB-KW"/>
</dbReference>
<dbReference type="GO" id="GO:0005840">
    <property type="term" value="C:ribosome"/>
    <property type="evidence" value="ECO:0007669"/>
    <property type="project" value="UniProtKB-KW"/>
</dbReference>
<dbReference type="GO" id="GO:0003735">
    <property type="term" value="F:structural constituent of ribosome"/>
    <property type="evidence" value="ECO:0007669"/>
    <property type="project" value="InterPro"/>
</dbReference>
<dbReference type="GO" id="GO:0000049">
    <property type="term" value="F:tRNA binding"/>
    <property type="evidence" value="ECO:0007669"/>
    <property type="project" value="UniProtKB-UniRule"/>
</dbReference>
<dbReference type="GO" id="GO:0006412">
    <property type="term" value="P:translation"/>
    <property type="evidence" value="ECO:0007669"/>
    <property type="project" value="UniProtKB-UniRule"/>
</dbReference>
<dbReference type="FunFam" id="3.30.70.600:FF:000001">
    <property type="entry name" value="30S ribosomal protein S10"/>
    <property type="match status" value="1"/>
</dbReference>
<dbReference type="Gene3D" id="3.30.70.600">
    <property type="entry name" value="Ribosomal protein S10 domain"/>
    <property type="match status" value="1"/>
</dbReference>
<dbReference type="HAMAP" id="MF_00508">
    <property type="entry name" value="Ribosomal_uS10"/>
    <property type="match status" value="1"/>
</dbReference>
<dbReference type="InterPro" id="IPR001848">
    <property type="entry name" value="Ribosomal_uS10"/>
</dbReference>
<dbReference type="InterPro" id="IPR018268">
    <property type="entry name" value="Ribosomal_uS10_CS"/>
</dbReference>
<dbReference type="InterPro" id="IPR027486">
    <property type="entry name" value="Ribosomal_uS10_dom"/>
</dbReference>
<dbReference type="InterPro" id="IPR036838">
    <property type="entry name" value="Ribosomal_uS10_dom_sf"/>
</dbReference>
<dbReference type="NCBIfam" id="NF001861">
    <property type="entry name" value="PRK00596.1"/>
    <property type="match status" value="1"/>
</dbReference>
<dbReference type="NCBIfam" id="TIGR01049">
    <property type="entry name" value="rpsJ_bact"/>
    <property type="match status" value="1"/>
</dbReference>
<dbReference type="PANTHER" id="PTHR11700">
    <property type="entry name" value="30S RIBOSOMAL PROTEIN S10 FAMILY MEMBER"/>
    <property type="match status" value="1"/>
</dbReference>
<dbReference type="Pfam" id="PF00338">
    <property type="entry name" value="Ribosomal_S10"/>
    <property type="match status" value="1"/>
</dbReference>
<dbReference type="PRINTS" id="PR00971">
    <property type="entry name" value="RIBOSOMALS10"/>
</dbReference>
<dbReference type="SMART" id="SM01403">
    <property type="entry name" value="Ribosomal_S10"/>
    <property type="match status" value="1"/>
</dbReference>
<dbReference type="SUPFAM" id="SSF54999">
    <property type="entry name" value="Ribosomal protein S10"/>
    <property type="match status" value="1"/>
</dbReference>
<dbReference type="PROSITE" id="PS00361">
    <property type="entry name" value="RIBOSOMAL_S10"/>
    <property type="match status" value="1"/>
</dbReference>
<comment type="function">
    <text evidence="1">Involved in the binding of tRNA to the ribosomes.</text>
</comment>
<comment type="subunit">
    <text evidence="1">Part of the 30S ribosomal subunit.</text>
</comment>
<comment type="similarity">
    <text evidence="1">Belongs to the universal ribosomal protein uS10 family.</text>
</comment>
<sequence length="102" mass="11570">MNGQNIRIRLKAFDHRILDASTREIVSTAKRTGASVRGPVPLPTRIEKFTVNRSPHIDKKSREQFEMRTHKRLLDIVDPTPQTVDALMKLDLAAGVDVEIKL</sequence>
<proteinExistence type="inferred from homology"/>
<reference key="1">
    <citation type="journal article" date="2010" name="Appl. Environ. Microbiol.">
        <title>Conserved symbiotic plasmid DNA sequences in the multireplicon pangenomic structure of Rhizobium etli.</title>
        <authorList>
            <person name="Gonzalez V."/>
            <person name="Acosta J.L."/>
            <person name="Santamaria R.I."/>
            <person name="Bustos P."/>
            <person name="Fernandez J.L."/>
            <person name="Hernandez Gonzalez I.L."/>
            <person name="Diaz R."/>
            <person name="Flores M."/>
            <person name="Palacios R."/>
            <person name="Mora J."/>
            <person name="Davila G."/>
        </authorList>
    </citation>
    <scope>NUCLEOTIDE SEQUENCE [LARGE SCALE GENOMIC DNA]</scope>
    <source>
        <strain>CIAT 652</strain>
    </source>
</reference>
<feature type="chain" id="PRO_1000127171" description="Small ribosomal subunit protein uS10">
    <location>
        <begin position="1"/>
        <end position="102"/>
    </location>
</feature>
<protein>
    <recommendedName>
        <fullName evidence="1">Small ribosomal subunit protein uS10</fullName>
    </recommendedName>
    <alternativeName>
        <fullName evidence="2">30S ribosomal protein S10</fullName>
    </alternativeName>
</protein>
<organism>
    <name type="scientific">Rhizobium etli (strain CIAT 652)</name>
    <dbReference type="NCBI Taxonomy" id="491916"/>
    <lineage>
        <taxon>Bacteria</taxon>
        <taxon>Pseudomonadati</taxon>
        <taxon>Pseudomonadota</taxon>
        <taxon>Alphaproteobacteria</taxon>
        <taxon>Hyphomicrobiales</taxon>
        <taxon>Rhizobiaceae</taxon>
        <taxon>Rhizobium/Agrobacterium group</taxon>
        <taxon>Rhizobium</taxon>
    </lineage>
</organism>
<name>RS10_RHIE6</name>
<evidence type="ECO:0000255" key="1">
    <source>
        <dbReference type="HAMAP-Rule" id="MF_00508"/>
    </source>
</evidence>
<evidence type="ECO:0000305" key="2"/>
<gene>
    <name evidence="1" type="primary">rpsJ</name>
    <name type="ordered locus">RHECIAT_CH0001748</name>
</gene>
<keyword id="KW-0687">Ribonucleoprotein</keyword>
<keyword id="KW-0689">Ribosomal protein</keyword>
<accession>B3PWS0</accession>